<name>RBL_PINED</name>
<proteinExistence type="inferred from homology"/>
<gene>
    <name evidence="1" type="primary">rbcL</name>
</gene>
<dbReference type="EC" id="4.1.1.39" evidence="1"/>
<dbReference type="EMBL" id="X58137">
    <property type="protein sequence ID" value="CAA41145.1"/>
    <property type="molecule type" value="Genomic_DNA"/>
</dbReference>
<dbReference type="PIR" id="H46161">
    <property type="entry name" value="RKSZLN"/>
</dbReference>
<dbReference type="SMR" id="P24675"/>
<dbReference type="GO" id="GO:0009507">
    <property type="term" value="C:chloroplast"/>
    <property type="evidence" value="ECO:0007669"/>
    <property type="project" value="UniProtKB-SubCell"/>
</dbReference>
<dbReference type="GO" id="GO:0000287">
    <property type="term" value="F:magnesium ion binding"/>
    <property type="evidence" value="ECO:0007669"/>
    <property type="project" value="UniProtKB-UniRule"/>
</dbReference>
<dbReference type="GO" id="GO:0004497">
    <property type="term" value="F:monooxygenase activity"/>
    <property type="evidence" value="ECO:0007669"/>
    <property type="project" value="UniProtKB-KW"/>
</dbReference>
<dbReference type="GO" id="GO:0016984">
    <property type="term" value="F:ribulose-bisphosphate carboxylase activity"/>
    <property type="evidence" value="ECO:0007669"/>
    <property type="project" value="UniProtKB-UniRule"/>
</dbReference>
<dbReference type="GO" id="GO:0009853">
    <property type="term" value="P:photorespiration"/>
    <property type="evidence" value="ECO:0007669"/>
    <property type="project" value="UniProtKB-KW"/>
</dbReference>
<dbReference type="GO" id="GO:0019253">
    <property type="term" value="P:reductive pentose-phosphate cycle"/>
    <property type="evidence" value="ECO:0007669"/>
    <property type="project" value="UniProtKB-UniRule"/>
</dbReference>
<dbReference type="CDD" id="cd08212">
    <property type="entry name" value="RuBisCO_large_I"/>
    <property type="match status" value="1"/>
</dbReference>
<dbReference type="FunFam" id="3.20.20.110:FF:000001">
    <property type="entry name" value="Ribulose bisphosphate carboxylase large chain"/>
    <property type="match status" value="1"/>
</dbReference>
<dbReference type="FunFam" id="3.30.70.150:FF:000001">
    <property type="entry name" value="Ribulose bisphosphate carboxylase large chain"/>
    <property type="match status" value="1"/>
</dbReference>
<dbReference type="Gene3D" id="3.20.20.110">
    <property type="entry name" value="Ribulose bisphosphate carboxylase, large subunit, C-terminal domain"/>
    <property type="match status" value="1"/>
</dbReference>
<dbReference type="Gene3D" id="3.30.70.150">
    <property type="entry name" value="RuBisCO large subunit, N-terminal domain"/>
    <property type="match status" value="1"/>
</dbReference>
<dbReference type="HAMAP" id="MF_01338">
    <property type="entry name" value="RuBisCO_L_type1"/>
    <property type="match status" value="1"/>
</dbReference>
<dbReference type="InterPro" id="IPR033966">
    <property type="entry name" value="RuBisCO"/>
</dbReference>
<dbReference type="InterPro" id="IPR020878">
    <property type="entry name" value="RuBisCo_large_chain_AS"/>
</dbReference>
<dbReference type="InterPro" id="IPR000685">
    <property type="entry name" value="RuBisCO_lsu_C"/>
</dbReference>
<dbReference type="InterPro" id="IPR036376">
    <property type="entry name" value="RuBisCO_lsu_C_sf"/>
</dbReference>
<dbReference type="InterPro" id="IPR017443">
    <property type="entry name" value="RuBisCO_lsu_fd_N"/>
</dbReference>
<dbReference type="InterPro" id="IPR036422">
    <property type="entry name" value="RuBisCO_lsu_N_sf"/>
</dbReference>
<dbReference type="InterPro" id="IPR020888">
    <property type="entry name" value="RuBisCO_lsuI"/>
</dbReference>
<dbReference type="NCBIfam" id="NF003252">
    <property type="entry name" value="PRK04208.1"/>
    <property type="match status" value="1"/>
</dbReference>
<dbReference type="PANTHER" id="PTHR42704">
    <property type="entry name" value="RIBULOSE BISPHOSPHATE CARBOXYLASE"/>
    <property type="match status" value="1"/>
</dbReference>
<dbReference type="PANTHER" id="PTHR42704:SF17">
    <property type="entry name" value="RIBULOSE BISPHOSPHATE CARBOXYLASE LARGE CHAIN"/>
    <property type="match status" value="1"/>
</dbReference>
<dbReference type="Pfam" id="PF00016">
    <property type="entry name" value="RuBisCO_large"/>
    <property type="match status" value="1"/>
</dbReference>
<dbReference type="Pfam" id="PF02788">
    <property type="entry name" value="RuBisCO_large_N"/>
    <property type="match status" value="1"/>
</dbReference>
<dbReference type="SFLD" id="SFLDG01052">
    <property type="entry name" value="RuBisCO"/>
    <property type="match status" value="1"/>
</dbReference>
<dbReference type="SFLD" id="SFLDS00014">
    <property type="entry name" value="RuBisCO"/>
    <property type="match status" value="1"/>
</dbReference>
<dbReference type="SFLD" id="SFLDG00301">
    <property type="entry name" value="RuBisCO-like_proteins"/>
    <property type="match status" value="1"/>
</dbReference>
<dbReference type="SUPFAM" id="SSF51649">
    <property type="entry name" value="RuBisCo, C-terminal domain"/>
    <property type="match status" value="1"/>
</dbReference>
<dbReference type="SUPFAM" id="SSF54966">
    <property type="entry name" value="RuBisCO, large subunit, small (N-terminal) domain"/>
    <property type="match status" value="1"/>
</dbReference>
<dbReference type="PROSITE" id="PS00157">
    <property type="entry name" value="RUBISCO_LARGE"/>
    <property type="match status" value="1"/>
</dbReference>
<accession>P24675</accession>
<reference key="1">
    <citation type="journal article" date="1992" name="Proc. Natl. Acad. Sci. U.S.A.">
        <title>Extensive variation in evolutionary rate of rbcL gene sequences among seed plants.</title>
        <authorList>
            <person name="Bousquet J."/>
            <person name="Strauss S.H."/>
            <person name="Doerksen A.H."/>
            <person name="Price R.A."/>
        </authorList>
    </citation>
    <scope>NUCLEOTIDE SEQUENCE [GENOMIC DNA]</scope>
</reference>
<sequence length="475" mass="52697">MSPKTETKASVGFKAGVKDYRLTYYTPEYQTKDTDILAAFRVTPQPGVPAEEAGAAVAAESSTGTWTTVWTDGLTSLDRYKGRCYDIEPVPGEENQFIAYVAYPLDLFEEGSVTNLFTSIVGNVFGFKALRALRLEDLRIPPAYSKTFQGPPHGIQVERDKLNKYGRPLLGCTIKPKLGLSAKNYGRAVYECLRGGLDFTKDDENVNSQPFMRWRDRFVFCAEAINKAQAETGEIKGHYLNATAGTCEEMIKRAVFARELGVPIVMHDYLTGGFTANTSLAHYCRDNGLLLHIHRAMHAVIDRQRNHGMHFRVLAKALRMSGGDHIHAGTVVGKLEGERDVTLGFVDLLRDDFIEKDRSRGIYFTQDWVSMPGVMPVASGGIHVWHMPALTEIFGDDSVLQFGGGTLGHPWGNAPGAVANRVALEACVQARNEGRDLAREGNEVIREASKWSPELAAACEIWKEIKFEFDVIDRL</sequence>
<keyword id="KW-0007">Acetylation</keyword>
<keyword id="KW-0113">Calvin cycle</keyword>
<keyword id="KW-0120">Carbon dioxide fixation</keyword>
<keyword id="KW-0150">Chloroplast</keyword>
<keyword id="KW-1015">Disulfide bond</keyword>
<keyword id="KW-0456">Lyase</keyword>
<keyword id="KW-0460">Magnesium</keyword>
<keyword id="KW-0479">Metal-binding</keyword>
<keyword id="KW-0488">Methylation</keyword>
<keyword id="KW-0503">Monooxygenase</keyword>
<keyword id="KW-0560">Oxidoreductase</keyword>
<keyword id="KW-0601">Photorespiration</keyword>
<keyword id="KW-0602">Photosynthesis</keyword>
<keyword id="KW-0934">Plastid</keyword>
<comment type="function">
    <text evidence="1">RuBisCO catalyzes two reactions: the carboxylation of D-ribulose 1,5-bisphosphate, the primary event in carbon dioxide fixation, as well as the oxidative fragmentation of the pentose substrate in the photorespiration process. Both reactions occur simultaneously and in competition at the same active site.</text>
</comment>
<comment type="catalytic activity">
    <reaction evidence="1">
        <text>2 (2R)-3-phosphoglycerate + 2 H(+) = D-ribulose 1,5-bisphosphate + CO2 + H2O</text>
        <dbReference type="Rhea" id="RHEA:23124"/>
        <dbReference type="ChEBI" id="CHEBI:15377"/>
        <dbReference type="ChEBI" id="CHEBI:15378"/>
        <dbReference type="ChEBI" id="CHEBI:16526"/>
        <dbReference type="ChEBI" id="CHEBI:57870"/>
        <dbReference type="ChEBI" id="CHEBI:58272"/>
        <dbReference type="EC" id="4.1.1.39"/>
    </reaction>
</comment>
<comment type="catalytic activity">
    <reaction evidence="1">
        <text>D-ribulose 1,5-bisphosphate + O2 = 2-phosphoglycolate + (2R)-3-phosphoglycerate + 2 H(+)</text>
        <dbReference type="Rhea" id="RHEA:36631"/>
        <dbReference type="ChEBI" id="CHEBI:15378"/>
        <dbReference type="ChEBI" id="CHEBI:15379"/>
        <dbReference type="ChEBI" id="CHEBI:57870"/>
        <dbReference type="ChEBI" id="CHEBI:58033"/>
        <dbReference type="ChEBI" id="CHEBI:58272"/>
    </reaction>
</comment>
<comment type="cofactor">
    <cofactor evidence="1">
        <name>Mg(2+)</name>
        <dbReference type="ChEBI" id="CHEBI:18420"/>
    </cofactor>
    <text evidence="1">Binds 1 Mg(2+) ion per subunit.</text>
</comment>
<comment type="subunit">
    <text evidence="1">Heterohexadecamer of 8 large chains and 8 small chains; disulfide-linked. The disulfide link is formed within the large subunit homodimers.</text>
</comment>
<comment type="subcellular location">
    <subcellularLocation>
        <location>Plastid</location>
        <location>Chloroplast</location>
    </subcellularLocation>
</comment>
<comment type="PTM">
    <text evidence="1">The disulfide bond which can form in the large chain dimeric partners within the hexadecamer appears to be associated with oxidative stress and protein turnover.</text>
</comment>
<comment type="miscellaneous">
    <text evidence="1">The basic functional RuBisCO is composed of a large chain homodimer in a 'head-to-tail' conformation. In form I RuBisCO this homodimer is arranged in a barrel-like tetramer with the small subunits forming a tetrameric 'cap' on each end of the 'barrel'.</text>
</comment>
<comment type="similarity">
    <text evidence="1">Belongs to the RuBisCO large chain family. Type I subfamily.</text>
</comment>
<protein>
    <recommendedName>
        <fullName evidence="1">Ribulose bisphosphate carboxylase large chain</fullName>
        <shortName evidence="1">RuBisCO large subunit</shortName>
        <ecNumber evidence="1">4.1.1.39</ecNumber>
    </recommendedName>
</protein>
<feature type="propeptide" id="PRO_0000031357" evidence="1">
    <location>
        <begin position="1"/>
        <end position="2"/>
    </location>
</feature>
<feature type="chain" id="PRO_0000031358" description="Ribulose bisphosphate carboxylase large chain">
    <location>
        <begin position="3"/>
        <end position="475"/>
    </location>
</feature>
<feature type="active site" description="Proton acceptor" evidence="1">
    <location>
        <position position="175"/>
    </location>
</feature>
<feature type="active site" description="Proton acceptor" evidence="1">
    <location>
        <position position="294"/>
    </location>
</feature>
<feature type="binding site" description="in homodimeric partner" evidence="1">
    <location>
        <position position="123"/>
    </location>
    <ligand>
        <name>substrate</name>
    </ligand>
</feature>
<feature type="binding site" evidence="1">
    <location>
        <position position="173"/>
    </location>
    <ligand>
        <name>substrate</name>
    </ligand>
</feature>
<feature type="binding site" evidence="1">
    <location>
        <position position="177"/>
    </location>
    <ligand>
        <name>substrate</name>
    </ligand>
</feature>
<feature type="binding site" description="via carbamate group" evidence="1">
    <location>
        <position position="201"/>
    </location>
    <ligand>
        <name>Mg(2+)</name>
        <dbReference type="ChEBI" id="CHEBI:18420"/>
    </ligand>
</feature>
<feature type="binding site" evidence="1">
    <location>
        <position position="203"/>
    </location>
    <ligand>
        <name>Mg(2+)</name>
        <dbReference type="ChEBI" id="CHEBI:18420"/>
    </ligand>
</feature>
<feature type="binding site" evidence="1">
    <location>
        <position position="204"/>
    </location>
    <ligand>
        <name>Mg(2+)</name>
        <dbReference type="ChEBI" id="CHEBI:18420"/>
    </ligand>
</feature>
<feature type="binding site" evidence="1">
    <location>
        <position position="295"/>
    </location>
    <ligand>
        <name>substrate</name>
    </ligand>
</feature>
<feature type="binding site" evidence="1">
    <location>
        <position position="327"/>
    </location>
    <ligand>
        <name>substrate</name>
    </ligand>
</feature>
<feature type="binding site" evidence="1">
    <location>
        <position position="379"/>
    </location>
    <ligand>
        <name>substrate</name>
    </ligand>
</feature>
<feature type="site" description="Transition state stabilizer" evidence="1">
    <location>
        <position position="334"/>
    </location>
</feature>
<feature type="modified residue" description="N-acetylproline" evidence="1">
    <location>
        <position position="3"/>
    </location>
</feature>
<feature type="modified residue" description="N6,N6,N6-trimethyllysine" evidence="1">
    <location>
        <position position="14"/>
    </location>
</feature>
<feature type="modified residue" description="N6-carboxylysine" evidence="1">
    <location>
        <position position="201"/>
    </location>
</feature>
<feature type="disulfide bond" description="Interchain; in linked form" evidence="1">
    <location>
        <position position="247"/>
    </location>
</feature>
<organism>
    <name type="scientific">Pinus edulis</name>
    <name type="common">Pinyon pine</name>
    <name type="synonym">Pinus cembroides var. edulis</name>
    <dbReference type="NCBI Taxonomy" id="3340"/>
    <lineage>
        <taxon>Eukaryota</taxon>
        <taxon>Viridiplantae</taxon>
        <taxon>Streptophyta</taxon>
        <taxon>Embryophyta</taxon>
        <taxon>Tracheophyta</taxon>
        <taxon>Spermatophyta</taxon>
        <taxon>Pinopsida</taxon>
        <taxon>Pinidae</taxon>
        <taxon>Conifers I</taxon>
        <taxon>Pinales</taxon>
        <taxon>Pinaceae</taxon>
        <taxon>Pinus</taxon>
        <taxon>Pinus subgen. Strobus</taxon>
    </lineage>
</organism>
<geneLocation type="chloroplast"/>
<evidence type="ECO:0000255" key="1">
    <source>
        <dbReference type="HAMAP-Rule" id="MF_01338"/>
    </source>
</evidence>